<proteinExistence type="inferred from homology"/>
<accession>B0V824</accession>
<evidence type="ECO:0000255" key="1">
    <source>
        <dbReference type="HAMAP-Rule" id="MF_00225"/>
    </source>
</evidence>
<keyword id="KW-1003">Cell membrane</keyword>
<keyword id="KW-0285">Flavoprotein</keyword>
<keyword id="KW-0288">FMN</keyword>
<keyword id="KW-0472">Membrane</keyword>
<keyword id="KW-0560">Oxidoreductase</keyword>
<keyword id="KW-0665">Pyrimidine biosynthesis</keyword>
<protein>
    <recommendedName>
        <fullName evidence="1">Dihydroorotate dehydrogenase (quinone)</fullName>
        <ecNumber evidence="1">1.3.5.2</ecNumber>
    </recommendedName>
    <alternativeName>
        <fullName evidence="1">DHOdehase</fullName>
        <shortName evidence="1">DHOD</shortName>
        <shortName evidence="1">DHODase</shortName>
    </alternativeName>
    <alternativeName>
        <fullName evidence="1">Dihydroorotate oxidase</fullName>
    </alternativeName>
</protein>
<feature type="chain" id="PRO_1000100243" description="Dihydroorotate dehydrogenase (quinone)">
    <location>
        <begin position="1"/>
        <end position="334"/>
    </location>
</feature>
<feature type="active site" description="Nucleophile" evidence="1">
    <location>
        <position position="172"/>
    </location>
</feature>
<feature type="binding site" evidence="1">
    <location>
        <begin position="59"/>
        <end position="63"/>
    </location>
    <ligand>
        <name>FMN</name>
        <dbReference type="ChEBI" id="CHEBI:58210"/>
    </ligand>
</feature>
<feature type="binding site" evidence="1">
    <location>
        <position position="63"/>
    </location>
    <ligand>
        <name>substrate</name>
    </ligand>
</feature>
<feature type="binding site" evidence="1">
    <location>
        <position position="83"/>
    </location>
    <ligand>
        <name>FMN</name>
        <dbReference type="ChEBI" id="CHEBI:58210"/>
    </ligand>
</feature>
<feature type="binding site" evidence="1">
    <location>
        <begin position="108"/>
        <end position="112"/>
    </location>
    <ligand>
        <name>substrate</name>
    </ligand>
</feature>
<feature type="binding site" evidence="1">
    <location>
        <position position="136"/>
    </location>
    <ligand>
        <name>FMN</name>
        <dbReference type="ChEBI" id="CHEBI:58210"/>
    </ligand>
</feature>
<feature type="binding site" evidence="1">
    <location>
        <position position="169"/>
    </location>
    <ligand>
        <name>FMN</name>
        <dbReference type="ChEBI" id="CHEBI:58210"/>
    </ligand>
</feature>
<feature type="binding site" evidence="1">
    <location>
        <position position="169"/>
    </location>
    <ligand>
        <name>substrate</name>
    </ligand>
</feature>
<feature type="binding site" evidence="1">
    <location>
        <position position="174"/>
    </location>
    <ligand>
        <name>substrate</name>
    </ligand>
</feature>
<feature type="binding site" evidence="1">
    <location>
        <position position="214"/>
    </location>
    <ligand>
        <name>FMN</name>
        <dbReference type="ChEBI" id="CHEBI:58210"/>
    </ligand>
</feature>
<feature type="binding site" evidence="1">
    <location>
        <position position="242"/>
    </location>
    <ligand>
        <name>FMN</name>
        <dbReference type="ChEBI" id="CHEBI:58210"/>
    </ligand>
</feature>
<feature type="binding site" evidence="1">
    <location>
        <begin position="243"/>
        <end position="244"/>
    </location>
    <ligand>
        <name>substrate</name>
    </ligand>
</feature>
<feature type="binding site" evidence="1">
    <location>
        <position position="265"/>
    </location>
    <ligand>
        <name>FMN</name>
        <dbReference type="ChEBI" id="CHEBI:58210"/>
    </ligand>
</feature>
<feature type="binding site" evidence="1">
    <location>
        <position position="294"/>
    </location>
    <ligand>
        <name>FMN</name>
        <dbReference type="ChEBI" id="CHEBI:58210"/>
    </ligand>
</feature>
<feature type="binding site" evidence="1">
    <location>
        <begin position="315"/>
        <end position="316"/>
    </location>
    <ligand>
        <name>FMN</name>
        <dbReference type="ChEBI" id="CHEBI:58210"/>
    </ligand>
</feature>
<dbReference type="EC" id="1.3.5.2" evidence="1"/>
<dbReference type="EMBL" id="CU459141">
    <property type="protein sequence ID" value="CAM86199.1"/>
    <property type="molecule type" value="Genomic_DNA"/>
</dbReference>
<dbReference type="RefSeq" id="WP_000966986.1">
    <property type="nucleotide sequence ID" value="NZ_JBDGFB010000016.1"/>
</dbReference>
<dbReference type="SMR" id="B0V824"/>
<dbReference type="EnsemblBacteria" id="CAM86199">
    <property type="protein sequence ID" value="CAM86199"/>
    <property type="gene ID" value="ABAYE1278"/>
</dbReference>
<dbReference type="KEGG" id="aby:ABAYE1278"/>
<dbReference type="HOGENOM" id="CLU_013640_2_0_6"/>
<dbReference type="UniPathway" id="UPA00070">
    <property type="reaction ID" value="UER00946"/>
</dbReference>
<dbReference type="GO" id="GO:0005737">
    <property type="term" value="C:cytoplasm"/>
    <property type="evidence" value="ECO:0007669"/>
    <property type="project" value="InterPro"/>
</dbReference>
<dbReference type="GO" id="GO:0005886">
    <property type="term" value="C:plasma membrane"/>
    <property type="evidence" value="ECO:0007669"/>
    <property type="project" value="UniProtKB-SubCell"/>
</dbReference>
<dbReference type="GO" id="GO:0106430">
    <property type="term" value="F:dihydroorotate dehydrogenase (quinone) activity"/>
    <property type="evidence" value="ECO:0007669"/>
    <property type="project" value="UniProtKB-EC"/>
</dbReference>
<dbReference type="GO" id="GO:0006207">
    <property type="term" value="P:'de novo' pyrimidine nucleobase biosynthetic process"/>
    <property type="evidence" value="ECO:0007669"/>
    <property type="project" value="InterPro"/>
</dbReference>
<dbReference type="GO" id="GO:0044205">
    <property type="term" value="P:'de novo' UMP biosynthetic process"/>
    <property type="evidence" value="ECO:0007669"/>
    <property type="project" value="UniProtKB-UniRule"/>
</dbReference>
<dbReference type="CDD" id="cd04738">
    <property type="entry name" value="DHOD_2_like"/>
    <property type="match status" value="1"/>
</dbReference>
<dbReference type="FunFam" id="3.20.20.70:FF:000028">
    <property type="entry name" value="Dihydroorotate dehydrogenase (quinone)"/>
    <property type="match status" value="1"/>
</dbReference>
<dbReference type="Gene3D" id="3.20.20.70">
    <property type="entry name" value="Aldolase class I"/>
    <property type="match status" value="1"/>
</dbReference>
<dbReference type="HAMAP" id="MF_00225">
    <property type="entry name" value="DHO_dh_type2"/>
    <property type="match status" value="1"/>
</dbReference>
<dbReference type="InterPro" id="IPR013785">
    <property type="entry name" value="Aldolase_TIM"/>
</dbReference>
<dbReference type="InterPro" id="IPR050074">
    <property type="entry name" value="DHO_dehydrogenase"/>
</dbReference>
<dbReference type="InterPro" id="IPR012135">
    <property type="entry name" value="Dihydroorotate_DH_1_2"/>
</dbReference>
<dbReference type="InterPro" id="IPR005719">
    <property type="entry name" value="Dihydroorotate_DH_2"/>
</dbReference>
<dbReference type="InterPro" id="IPR005720">
    <property type="entry name" value="Dihydroorotate_DH_cat"/>
</dbReference>
<dbReference type="InterPro" id="IPR001295">
    <property type="entry name" value="Dihydroorotate_DH_CS"/>
</dbReference>
<dbReference type="NCBIfam" id="NF003644">
    <property type="entry name" value="PRK05286.1-1"/>
    <property type="match status" value="1"/>
</dbReference>
<dbReference type="NCBIfam" id="NF003645">
    <property type="entry name" value="PRK05286.1-2"/>
    <property type="match status" value="1"/>
</dbReference>
<dbReference type="NCBIfam" id="NF003646">
    <property type="entry name" value="PRK05286.1-4"/>
    <property type="match status" value="1"/>
</dbReference>
<dbReference type="NCBIfam" id="NF003652">
    <property type="entry name" value="PRK05286.2-5"/>
    <property type="match status" value="1"/>
</dbReference>
<dbReference type="NCBIfam" id="TIGR01036">
    <property type="entry name" value="pyrD_sub2"/>
    <property type="match status" value="1"/>
</dbReference>
<dbReference type="PANTHER" id="PTHR48109:SF4">
    <property type="entry name" value="DIHYDROOROTATE DEHYDROGENASE (QUINONE), MITOCHONDRIAL"/>
    <property type="match status" value="1"/>
</dbReference>
<dbReference type="PANTHER" id="PTHR48109">
    <property type="entry name" value="DIHYDROOROTATE DEHYDROGENASE (QUINONE), MITOCHONDRIAL-RELATED"/>
    <property type="match status" value="1"/>
</dbReference>
<dbReference type="Pfam" id="PF01180">
    <property type="entry name" value="DHO_dh"/>
    <property type="match status" value="1"/>
</dbReference>
<dbReference type="PIRSF" id="PIRSF000164">
    <property type="entry name" value="DHO_oxidase"/>
    <property type="match status" value="1"/>
</dbReference>
<dbReference type="SUPFAM" id="SSF51395">
    <property type="entry name" value="FMN-linked oxidoreductases"/>
    <property type="match status" value="1"/>
</dbReference>
<dbReference type="PROSITE" id="PS00911">
    <property type="entry name" value="DHODEHASE_1"/>
    <property type="match status" value="1"/>
</dbReference>
<dbReference type="PROSITE" id="PS00912">
    <property type="entry name" value="DHODEHASE_2"/>
    <property type="match status" value="1"/>
</dbReference>
<organism>
    <name type="scientific">Acinetobacter baumannii (strain AYE)</name>
    <dbReference type="NCBI Taxonomy" id="509173"/>
    <lineage>
        <taxon>Bacteria</taxon>
        <taxon>Pseudomonadati</taxon>
        <taxon>Pseudomonadota</taxon>
        <taxon>Gammaproteobacteria</taxon>
        <taxon>Moraxellales</taxon>
        <taxon>Moraxellaceae</taxon>
        <taxon>Acinetobacter</taxon>
        <taxon>Acinetobacter calcoaceticus/baumannii complex</taxon>
    </lineage>
</organism>
<name>PYRD_ACIBY</name>
<reference key="1">
    <citation type="journal article" date="2008" name="PLoS ONE">
        <title>Comparative analysis of Acinetobacters: three genomes for three lifestyles.</title>
        <authorList>
            <person name="Vallenet D."/>
            <person name="Nordmann P."/>
            <person name="Barbe V."/>
            <person name="Poirel L."/>
            <person name="Mangenot S."/>
            <person name="Bataille E."/>
            <person name="Dossat C."/>
            <person name="Gas S."/>
            <person name="Kreimeyer A."/>
            <person name="Lenoble P."/>
            <person name="Oztas S."/>
            <person name="Poulain J."/>
            <person name="Segurens B."/>
            <person name="Robert C."/>
            <person name="Abergel C."/>
            <person name="Claverie J.-M."/>
            <person name="Raoult D."/>
            <person name="Medigue C."/>
            <person name="Weissenbach J."/>
            <person name="Cruveiller S."/>
        </authorList>
    </citation>
    <scope>NUCLEOTIDE SEQUENCE [LARGE SCALE GENOMIC DNA]</scope>
    <source>
        <strain>AYE</strain>
    </source>
</reference>
<sequence>MLYSLARPMLFSLAPERAHELTLSMLDKAHKLGMMRQTVEAKPTTCMGIEFPNPVGLAAGLDKNGAHIDALAGLGFGFIEIGTITPRPQSGNPKPRLFRIPEAKAIINRMGFNNDGVDKLIENVKASKFRGILGINIGKNADTPVEKAVDDYLICLEKVYNYASYITVNISSPNTKNLRSLQSGDALTELLQTLKARQLELAEQYNHYVPLVLKVAPDLTAEDVEFISAQLLDFKIDGLIVTNTTLSREGVENLPYGNESGGLSGAPVFEKSTECLRLFAQTLKGQIPLIGVGGILSGEQAAAKQQAGATLVQIYSGLIYTGPTLVKQCVEAMT</sequence>
<comment type="function">
    <text evidence="1">Catalyzes the conversion of dihydroorotate to orotate with quinone as electron acceptor.</text>
</comment>
<comment type="catalytic activity">
    <reaction evidence="1">
        <text>(S)-dihydroorotate + a quinone = orotate + a quinol</text>
        <dbReference type="Rhea" id="RHEA:30187"/>
        <dbReference type="ChEBI" id="CHEBI:24646"/>
        <dbReference type="ChEBI" id="CHEBI:30839"/>
        <dbReference type="ChEBI" id="CHEBI:30864"/>
        <dbReference type="ChEBI" id="CHEBI:132124"/>
        <dbReference type="EC" id="1.3.5.2"/>
    </reaction>
</comment>
<comment type="cofactor">
    <cofactor evidence="1">
        <name>FMN</name>
        <dbReference type="ChEBI" id="CHEBI:58210"/>
    </cofactor>
    <text evidence="1">Binds 1 FMN per subunit.</text>
</comment>
<comment type="pathway">
    <text evidence="1">Pyrimidine metabolism; UMP biosynthesis via de novo pathway; orotate from (S)-dihydroorotate (quinone route): step 1/1.</text>
</comment>
<comment type="subunit">
    <text evidence="1">Monomer.</text>
</comment>
<comment type="subcellular location">
    <subcellularLocation>
        <location evidence="1">Cell membrane</location>
        <topology evidence="1">Peripheral membrane protein</topology>
    </subcellularLocation>
</comment>
<comment type="similarity">
    <text evidence="1">Belongs to the dihydroorotate dehydrogenase family. Type 2 subfamily.</text>
</comment>
<gene>
    <name evidence="1" type="primary">pyrD</name>
    <name type="ordered locus">ABAYE1278</name>
</gene>